<sequence length="203" mass="22081">MSAIGHSPTACSRCSRPRLRRKDLTSVLSPRLPCFKVSSSGEAFATDKADFITPKDLDDPCASPGWEASSLAQAKRYGKSKMANVLFAAELQRRMDAEGVDIISISLNPGPVKTQGAADVLPFMVRPMVWLFFKDPAEGAQTTLFAAAAAEIREEKERWKGGYLDGPGKLKSPSPRARDPQVAYNLWHTTESAVRAIGVLDKS</sequence>
<gene>
    <name evidence="5" type="primary">dpmpH</name>
    <name type="ORF">MPH_09200</name>
</gene>
<name>DPMPH_MACPH</name>
<organism>
    <name type="scientific">Macrophomina phaseolina (strain MS6)</name>
    <name type="common">Charcoal rot fungus</name>
    <dbReference type="NCBI Taxonomy" id="1126212"/>
    <lineage>
        <taxon>Eukaryota</taxon>
        <taxon>Fungi</taxon>
        <taxon>Dikarya</taxon>
        <taxon>Ascomycota</taxon>
        <taxon>Pezizomycotina</taxon>
        <taxon>Dothideomycetes</taxon>
        <taxon>Dothideomycetes incertae sedis</taxon>
        <taxon>Botryosphaeriales</taxon>
        <taxon>Botryosphaeriaceae</taxon>
        <taxon>Macrophomina</taxon>
    </lineage>
</organism>
<feature type="chain" id="PRO_0000451552" description="Short chain dehydrogenase/reductase dpmpH">
    <location>
        <begin position="1"/>
        <end position="203"/>
    </location>
</feature>
<feature type="active site" description="Proton acceptor" evidence="3">
    <location>
        <position position="77"/>
    </location>
</feature>
<feature type="active site" description="Lowers pKa of active site Tyr" evidence="2">
    <location>
        <position position="81"/>
    </location>
</feature>
<feature type="binding site" evidence="1">
    <location>
        <position position="23"/>
    </location>
    <ligand>
        <name>NADP(+)</name>
        <dbReference type="ChEBI" id="CHEBI:58349"/>
    </ligand>
</feature>
<feature type="binding site" evidence="2">
    <location>
        <position position="77"/>
    </location>
    <ligand>
        <name>NADP(+)</name>
        <dbReference type="ChEBI" id="CHEBI:58349"/>
    </ligand>
</feature>
<feature type="binding site" evidence="2">
    <location>
        <position position="81"/>
    </location>
    <ligand>
        <name>NADP(+)</name>
        <dbReference type="ChEBI" id="CHEBI:58349"/>
    </ligand>
</feature>
<proteinExistence type="evidence at protein level"/>
<reference key="1">
    <citation type="journal article" date="2012" name="BMC Genomics">
        <title>Tools to kill: Genome of one of the most destructive plant pathogenic fungi Macrophomina phaseolina.</title>
        <authorList>
            <person name="Islam M.S."/>
            <person name="Haque M.S."/>
            <person name="Islam M.M."/>
            <person name="Emdad E.M."/>
            <person name="Halim A."/>
            <person name="Hossen Q.M.M."/>
            <person name="Hossain M.Z."/>
            <person name="Ahmed B."/>
            <person name="Rahim S."/>
            <person name="Rahman M.S."/>
            <person name="Alam M.M."/>
            <person name="Hou S."/>
            <person name="Wan X."/>
            <person name="Saito J.A."/>
            <person name="Alam M."/>
        </authorList>
    </citation>
    <scope>NUCLEOTIDE SEQUENCE [LARGE SCALE GENOMIC DNA]</scope>
    <source>
        <strain>MS6</strain>
    </source>
</reference>
<reference key="2">
    <citation type="journal article" date="2020" name="Nat. Commun.">
        <title>Synthetic biology based construction of biological activity-related library of fungal decalin-containing diterpenoid pyrones.</title>
        <authorList>
            <person name="Tsukada K."/>
            <person name="Shinki S."/>
            <person name="Kaneko A."/>
            <person name="Murakami K."/>
            <person name="Irie K."/>
            <person name="Murai M."/>
            <person name="Miyoshi H."/>
            <person name="Dan S."/>
            <person name="Kawaji K."/>
            <person name="Hayashi H."/>
            <person name="Kodama E.N."/>
            <person name="Hori A."/>
            <person name="Salim E."/>
            <person name="Kuraishi T."/>
            <person name="Hirata N."/>
            <person name="Kanda Y."/>
            <person name="Asai T."/>
        </authorList>
    </citation>
    <scope>FUNCTION</scope>
    <scope>CATALYTIC ACTIVITY</scope>
    <scope>PATHWAY</scope>
    <scope>BIOTECHNOLOGY</scope>
</reference>
<protein>
    <recommendedName>
        <fullName evidence="5">Short chain dehydrogenase/reductase dpmpH</fullName>
        <ecNumber evidence="4">1.1.1.-</ecNumber>
    </recommendedName>
    <alternativeName>
        <fullName evidence="5">Diterpenoid pyrone biosynthesis cluster protein H</fullName>
    </alternativeName>
</protein>
<keyword id="KW-0521">NADP</keyword>
<keyword id="KW-0560">Oxidoreductase</keyword>
<keyword id="KW-1185">Reference proteome</keyword>
<comment type="function">
    <text evidence="4 7">Short chain dehydrogenase/reductase; part of the gene cluster that mediates the biosynthesis of diterpenoid pyrones (PubMed:32286350). The first step of the pathway is the synthesis of the alpha-pyrone moiety by the polyketide synthase dpmpA via condensation of one acetyl-CoA starter unit with 3 malonyl-CoA units and 2 methylations (Probable). The alpha-pyrone is then combined with geranylgeranyl pyrophosphate (GGPP) formed by the GGPP synthase dpmpD through the action of the prenyltransferase dpmpC to yield a linear alpha-pyrone diterpenoid (Probable). Subsequent steps in the diterpenoid pyrone biosynthetic pathway involve the decalin core formation, which is initiated by the epoxidation of the C10-C11 olefin by the FAD-dependent oxidoreductase dpmpE, and is followed by a cyclization cascade catalyzed by the terpene cyclase dpmpB (Probable). The short chain dehydrogenase/reductase dpmpG then oxidizes the 8S hydroxy group to a ketone and the short chain dehydrogenase/reductase dpmpH reduces the ketone to the 8R hydroxy group to yield higginsianin B (PubMed:32286350). Higginsianin B is further methylated by the methyltransferase dpmpI to produce the intermediate named FDDP B (PubMed:32286350). The cytochrome P450 monooxygenase dpmpJ then oxidizes the C-26 methyl to primary alcohol, producing the final diterpenoid pyrone with a C-26 primary alcohol on the gamma-pyrone moiety named FDDP C (PubMed:32286350).</text>
</comment>
<comment type="pathway">
    <text evidence="4">Secondary metabolite biosynthesis; terpenoid biosynthesis.</text>
</comment>
<comment type="biotechnology">
    <text evidence="4">Diterpenoid pyrones display various biological activities and FDDP C shows anti-cancer and anti-HIV activities (PubMed:32286350). FDDP C also shows inhibitory activity of 42-mer-amyloid beta aggregation that is involved in the pathogenesis of Alzheimer's disease (PubMed:32286350).</text>
</comment>
<comment type="similarity">
    <text evidence="6">Belongs to the short-chain dehydrogenases/reductases (SDR) family.</text>
</comment>
<accession>K2RU68</accession>
<dbReference type="EC" id="1.1.1.-" evidence="4"/>
<dbReference type="EMBL" id="AHHD01000387">
    <property type="protein sequence ID" value="EKG13734.1"/>
    <property type="molecule type" value="Genomic_DNA"/>
</dbReference>
<dbReference type="STRING" id="1126212.K2RU68"/>
<dbReference type="VEuPathDB" id="FungiDB:MPH_09200"/>
<dbReference type="eggNOG" id="KOG1208">
    <property type="taxonomic scope" value="Eukaryota"/>
</dbReference>
<dbReference type="HOGENOM" id="CLU_1349169_0_0_1"/>
<dbReference type="InParanoid" id="K2RU68"/>
<dbReference type="OrthoDB" id="191139at2759"/>
<dbReference type="UniPathway" id="UPA00213"/>
<dbReference type="Proteomes" id="UP000007129">
    <property type="component" value="Unassembled WGS sequence"/>
</dbReference>
<dbReference type="GO" id="GO:0016491">
    <property type="term" value="F:oxidoreductase activity"/>
    <property type="evidence" value="ECO:0007669"/>
    <property type="project" value="UniProtKB-KW"/>
</dbReference>
<dbReference type="GO" id="GO:0016114">
    <property type="term" value="P:terpenoid biosynthetic process"/>
    <property type="evidence" value="ECO:0007669"/>
    <property type="project" value="UniProtKB-UniPathway"/>
</dbReference>
<dbReference type="Gene3D" id="3.40.50.720">
    <property type="entry name" value="NAD(P)-binding Rossmann-like Domain"/>
    <property type="match status" value="1"/>
</dbReference>
<dbReference type="InterPro" id="IPR036291">
    <property type="entry name" value="NAD(P)-bd_dom_sf"/>
</dbReference>
<dbReference type="PANTHER" id="PTHR43157:SF31">
    <property type="entry name" value="PHOSPHATIDYLINOSITOL-GLYCAN BIOSYNTHESIS CLASS F PROTEIN"/>
    <property type="match status" value="1"/>
</dbReference>
<dbReference type="PANTHER" id="PTHR43157">
    <property type="entry name" value="PHOSPHATIDYLINOSITOL-GLYCAN BIOSYNTHESIS CLASS F PROTEIN-RELATED"/>
    <property type="match status" value="1"/>
</dbReference>
<dbReference type="SUPFAM" id="SSF51735">
    <property type="entry name" value="NAD(P)-binding Rossmann-fold domains"/>
    <property type="match status" value="1"/>
</dbReference>
<evidence type="ECO:0000250" key="1">
    <source>
        <dbReference type="UniProtKB" id="L0E2Z4"/>
    </source>
</evidence>
<evidence type="ECO:0000250" key="2">
    <source>
        <dbReference type="UniProtKB" id="O93868"/>
    </source>
</evidence>
<evidence type="ECO:0000255" key="3">
    <source>
        <dbReference type="PROSITE-ProRule" id="PRU10001"/>
    </source>
</evidence>
<evidence type="ECO:0000269" key="4">
    <source>
    </source>
</evidence>
<evidence type="ECO:0000303" key="5">
    <source>
    </source>
</evidence>
<evidence type="ECO:0000305" key="6"/>
<evidence type="ECO:0000305" key="7">
    <source>
    </source>
</evidence>